<keyword id="KW-0963">Cytoplasm</keyword>
<keyword id="KW-0255">Endonuclease</keyword>
<keyword id="KW-0378">Hydrolase</keyword>
<keyword id="KW-0479">Metal-binding</keyword>
<keyword id="KW-0540">Nuclease</keyword>
<keyword id="KW-1185">Reference proteome</keyword>
<keyword id="KW-0690">Ribosome biogenesis</keyword>
<keyword id="KW-0698">rRNA processing</keyword>
<keyword id="KW-0862">Zinc</keyword>
<accession>B9E6W1</accession>
<dbReference type="EC" id="3.1.-.-" evidence="1"/>
<dbReference type="EMBL" id="AP009484">
    <property type="protein sequence ID" value="BAH17929.1"/>
    <property type="molecule type" value="Genomic_DNA"/>
</dbReference>
<dbReference type="RefSeq" id="WP_012657127.1">
    <property type="nucleotide sequence ID" value="NC_011999.1"/>
</dbReference>
<dbReference type="SMR" id="B9E6W1"/>
<dbReference type="STRING" id="458233.MCCL_1222"/>
<dbReference type="KEGG" id="mcl:MCCL_1222"/>
<dbReference type="eggNOG" id="COG0319">
    <property type="taxonomic scope" value="Bacteria"/>
</dbReference>
<dbReference type="HOGENOM" id="CLU_106710_3_0_9"/>
<dbReference type="OrthoDB" id="9807740at2"/>
<dbReference type="Proteomes" id="UP000001383">
    <property type="component" value="Chromosome"/>
</dbReference>
<dbReference type="GO" id="GO:0005737">
    <property type="term" value="C:cytoplasm"/>
    <property type="evidence" value="ECO:0007669"/>
    <property type="project" value="UniProtKB-SubCell"/>
</dbReference>
<dbReference type="GO" id="GO:0004222">
    <property type="term" value="F:metalloendopeptidase activity"/>
    <property type="evidence" value="ECO:0007669"/>
    <property type="project" value="InterPro"/>
</dbReference>
<dbReference type="GO" id="GO:0004521">
    <property type="term" value="F:RNA endonuclease activity"/>
    <property type="evidence" value="ECO:0007669"/>
    <property type="project" value="UniProtKB-UniRule"/>
</dbReference>
<dbReference type="GO" id="GO:0008270">
    <property type="term" value="F:zinc ion binding"/>
    <property type="evidence" value="ECO:0007669"/>
    <property type="project" value="UniProtKB-UniRule"/>
</dbReference>
<dbReference type="GO" id="GO:0006364">
    <property type="term" value="P:rRNA processing"/>
    <property type="evidence" value="ECO:0007669"/>
    <property type="project" value="UniProtKB-UniRule"/>
</dbReference>
<dbReference type="Gene3D" id="3.40.390.30">
    <property type="entry name" value="Metalloproteases ('zincins'), catalytic domain"/>
    <property type="match status" value="1"/>
</dbReference>
<dbReference type="HAMAP" id="MF_00009">
    <property type="entry name" value="Endoribonucl_YbeY"/>
    <property type="match status" value="1"/>
</dbReference>
<dbReference type="InterPro" id="IPR023091">
    <property type="entry name" value="MetalPrtase_cat_dom_sf_prd"/>
</dbReference>
<dbReference type="InterPro" id="IPR002036">
    <property type="entry name" value="YbeY"/>
</dbReference>
<dbReference type="InterPro" id="IPR020549">
    <property type="entry name" value="YbeY_CS"/>
</dbReference>
<dbReference type="NCBIfam" id="TIGR00043">
    <property type="entry name" value="rRNA maturation RNase YbeY"/>
    <property type="match status" value="1"/>
</dbReference>
<dbReference type="PANTHER" id="PTHR46986">
    <property type="entry name" value="ENDORIBONUCLEASE YBEY, CHLOROPLASTIC"/>
    <property type="match status" value="1"/>
</dbReference>
<dbReference type="PANTHER" id="PTHR46986:SF1">
    <property type="entry name" value="ENDORIBONUCLEASE YBEY, CHLOROPLASTIC"/>
    <property type="match status" value="1"/>
</dbReference>
<dbReference type="Pfam" id="PF02130">
    <property type="entry name" value="YbeY"/>
    <property type="match status" value="1"/>
</dbReference>
<dbReference type="SUPFAM" id="SSF55486">
    <property type="entry name" value="Metalloproteases ('zincins'), catalytic domain"/>
    <property type="match status" value="1"/>
</dbReference>
<dbReference type="PROSITE" id="PS01306">
    <property type="entry name" value="UPF0054"/>
    <property type="match status" value="1"/>
</dbReference>
<feature type="chain" id="PRO_1000199982" description="Endoribonuclease YbeY">
    <location>
        <begin position="1"/>
        <end position="154"/>
    </location>
</feature>
<feature type="binding site" evidence="1">
    <location>
        <position position="118"/>
    </location>
    <ligand>
        <name>Zn(2+)</name>
        <dbReference type="ChEBI" id="CHEBI:29105"/>
        <note>catalytic</note>
    </ligand>
</feature>
<feature type="binding site" evidence="1">
    <location>
        <position position="122"/>
    </location>
    <ligand>
        <name>Zn(2+)</name>
        <dbReference type="ChEBI" id="CHEBI:29105"/>
        <note>catalytic</note>
    </ligand>
</feature>
<feature type="binding site" evidence="1">
    <location>
        <position position="128"/>
    </location>
    <ligand>
        <name>Zn(2+)</name>
        <dbReference type="ChEBI" id="CHEBI:29105"/>
        <note>catalytic</note>
    </ligand>
</feature>
<gene>
    <name evidence="1" type="primary">ybeY</name>
    <name type="ordered locus">MCCL_1222</name>
</gene>
<proteinExistence type="inferred from homology"/>
<organism>
    <name type="scientific">Macrococcus caseolyticus (strain JCSC5402)</name>
    <name type="common">Macrococcoides caseolyticum</name>
    <dbReference type="NCBI Taxonomy" id="458233"/>
    <lineage>
        <taxon>Bacteria</taxon>
        <taxon>Bacillati</taxon>
        <taxon>Bacillota</taxon>
        <taxon>Bacilli</taxon>
        <taxon>Bacillales</taxon>
        <taxon>Staphylococcaceae</taxon>
        <taxon>Macrococcoides</taxon>
    </lineage>
</organism>
<protein>
    <recommendedName>
        <fullName evidence="1">Endoribonuclease YbeY</fullName>
        <ecNumber evidence="1">3.1.-.-</ecNumber>
    </recommendedName>
</protein>
<name>YBEY_MACCJ</name>
<reference key="1">
    <citation type="journal article" date="2009" name="J. Bacteriol.">
        <title>Complete genome sequence of Macrococcus caseolyticus strain JCSCS5402, reflecting the ancestral genome of the human-pathogenic staphylococci.</title>
        <authorList>
            <person name="Baba T."/>
            <person name="Kuwahara-Arai K."/>
            <person name="Uchiyama I."/>
            <person name="Takeuchi F."/>
            <person name="Ito T."/>
            <person name="Hiramatsu K."/>
        </authorList>
    </citation>
    <scope>NUCLEOTIDE SEQUENCE [LARGE SCALE GENOMIC DNA]</scope>
    <source>
        <strain>JCSC5402</strain>
    </source>
</reference>
<comment type="function">
    <text evidence="1">Single strand-specific metallo-endoribonuclease involved in late-stage 70S ribosome quality control and in maturation of the 3' terminus of the 16S rRNA.</text>
</comment>
<comment type="cofactor">
    <cofactor evidence="1">
        <name>Zn(2+)</name>
        <dbReference type="ChEBI" id="CHEBI:29105"/>
    </cofactor>
    <text evidence="1">Binds 1 zinc ion.</text>
</comment>
<comment type="subcellular location">
    <subcellularLocation>
        <location evidence="1">Cytoplasm</location>
    </subcellularLocation>
</comment>
<comment type="similarity">
    <text evidence="1">Belongs to the endoribonuclease YbeY family.</text>
</comment>
<sequence length="154" mass="17560">MLTVDFIDDNAQIDAKHLPEIERLLIFAAEQEGIDEEAEVAVSFVDENEIQAINKAYRNKDAVTDVISFALEEGEDDFEMSDEPRVLGDIIICVKRALEQAEEYGHSFERELGFLSLHGLLHLLGYDHMNESDEARMFGRQDEILNAFGLRRDV</sequence>
<evidence type="ECO:0000255" key="1">
    <source>
        <dbReference type="HAMAP-Rule" id="MF_00009"/>
    </source>
</evidence>